<keyword id="KW-0687">Ribonucleoprotein</keyword>
<keyword id="KW-0689">Ribosomal protein</keyword>
<keyword id="KW-0694">RNA-binding</keyword>
<keyword id="KW-0699">rRNA-binding</keyword>
<sequence>MSRVAKAPVSIPAGVEVTLNEQTLTVKGAKGSLTRVINNAVNVVIEDGVVKFLPVEGVVNAWAQAGTTRALVNNMVVGVSQGFERKLKLVGVGYRAKLVGADIDLTLGFSHPLVHKLPAGVTAECPSQTDIVLRGVDKQLIGQVAAEIRGYRPPEPYKGKGVRYDDEEVRRKEAKKK</sequence>
<reference key="1">
    <citation type="submission" date="2007-04" db="EMBL/GenBank/DDBJ databases">
        <title>Complete sequence of Shewanella putrefaciens CN-32.</title>
        <authorList>
            <consortium name="US DOE Joint Genome Institute"/>
            <person name="Copeland A."/>
            <person name="Lucas S."/>
            <person name="Lapidus A."/>
            <person name="Barry K."/>
            <person name="Detter J.C."/>
            <person name="Glavina del Rio T."/>
            <person name="Hammon N."/>
            <person name="Israni S."/>
            <person name="Dalin E."/>
            <person name="Tice H."/>
            <person name="Pitluck S."/>
            <person name="Chain P."/>
            <person name="Malfatti S."/>
            <person name="Shin M."/>
            <person name="Vergez L."/>
            <person name="Schmutz J."/>
            <person name="Larimer F."/>
            <person name="Land M."/>
            <person name="Hauser L."/>
            <person name="Kyrpides N."/>
            <person name="Mikhailova N."/>
            <person name="Romine M.F."/>
            <person name="Fredrickson J."/>
            <person name="Tiedje J."/>
            <person name="Richardson P."/>
        </authorList>
    </citation>
    <scope>NUCLEOTIDE SEQUENCE [LARGE SCALE GENOMIC DNA]</scope>
    <source>
        <strain>CN-32 / ATCC BAA-453</strain>
    </source>
</reference>
<comment type="function">
    <text evidence="1">This protein binds to the 23S rRNA, and is important in its secondary structure. It is located near the subunit interface in the base of the L7/L12 stalk, and near the tRNA binding site of the peptidyltransferase center.</text>
</comment>
<comment type="subunit">
    <text evidence="1">Part of the 50S ribosomal subunit.</text>
</comment>
<comment type="similarity">
    <text evidence="1">Belongs to the universal ribosomal protein uL6 family.</text>
</comment>
<organism>
    <name type="scientific">Shewanella putrefaciens (strain CN-32 / ATCC BAA-453)</name>
    <dbReference type="NCBI Taxonomy" id="319224"/>
    <lineage>
        <taxon>Bacteria</taxon>
        <taxon>Pseudomonadati</taxon>
        <taxon>Pseudomonadota</taxon>
        <taxon>Gammaproteobacteria</taxon>
        <taxon>Alteromonadales</taxon>
        <taxon>Shewanellaceae</taxon>
        <taxon>Shewanella</taxon>
    </lineage>
</organism>
<proteinExistence type="inferred from homology"/>
<gene>
    <name evidence="1" type="primary">rplF</name>
    <name type="ordered locus">Sputcn32_3744</name>
</gene>
<name>RL6_SHEPC</name>
<accession>A4YBW8</accession>
<feature type="chain" id="PRO_1000055306" description="Large ribosomal subunit protein uL6">
    <location>
        <begin position="1"/>
        <end position="177"/>
    </location>
</feature>
<feature type="region of interest" description="Disordered" evidence="2">
    <location>
        <begin position="152"/>
        <end position="177"/>
    </location>
</feature>
<feature type="compositionally biased region" description="Basic and acidic residues" evidence="2">
    <location>
        <begin position="152"/>
        <end position="171"/>
    </location>
</feature>
<dbReference type="EMBL" id="CP000681">
    <property type="protein sequence ID" value="ABP77451.1"/>
    <property type="molecule type" value="Genomic_DNA"/>
</dbReference>
<dbReference type="SMR" id="A4YBW8"/>
<dbReference type="STRING" id="319224.Sputcn32_3744"/>
<dbReference type="KEGG" id="spc:Sputcn32_3744"/>
<dbReference type="eggNOG" id="COG0097">
    <property type="taxonomic scope" value="Bacteria"/>
</dbReference>
<dbReference type="HOGENOM" id="CLU_065464_1_2_6"/>
<dbReference type="GO" id="GO:0022625">
    <property type="term" value="C:cytosolic large ribosomal subunit"/>
    <property type="evidence" value="ECO:0007669"/>
    <property type="project" value="TreeGrafter"/>
</dbReference>
<dbReference type="GO" id="GO:0019843">
    <property type="term" value="F:rRNA binding"/>
    <property type="evidence" value="ECO:0007669"/>
    <property type="project" value="UniProtKB-UniRule"/>
</dbReference>
<dbReference type="GO" id="GO:0003735">
    <property type="term" value="F:structural constituent of ribosome"/>
    <property type="evidence" value="ECO:0007669"/>
    <property type="project" value="InterPro"/>
</dbReference>
<dbReference type="GO" id="GO:0002181">
    <property type="term" value="P:cytoplasmic translation"/>
    <property type="evidence" value="ECO:0007669"/>
    <property type="project" value="TreeGrafter"/>
</dbReference>
<dbReference type="FunFam" id="3.90.930.12:FF:000001">
    <property type="entry name" value="50S ribosomal protein L6"/>
    <property type="match status" value="1"/>
</dbReference>
<dbReference type="FunFam" id="3.90.930.12:FF:000002">
    <property type="entry name" value="50S ribosomal protein L6"/>
    <property type="match status" value="1"/>
</dbReference>
<dbReference type="Gene3D" id="3.90.930.12">
    <property type="entry name" value="Ribosomal protein L6, alpha-beta domain"/>
    <property type="match status" value="2"/>
</dbReference>
<dbReference type="HAMAP" id="MF_01365_B">
    <property type="entry name" value="Ribosomal_uL6_B"/>
    <property type="match status" value="1"/>
</dbReference>
<dbReference type="InterPro" id="IPR000702">
    <property type="entry name" value="Ribosomal_uL6-like"/>
</dbReference>
<dbReference type="InterPro" id="IPR036789">
    <property type="entry name" value="Ribosomal_uL6-like_a/b-dom_sf"/>
</dbReference>
<dbReference type="InterPro" id="IPR020040">
    <property type="entry name" value="Ribosomal_uL6_a/b-dom"/>
</dbReference>
<dbReference type="InterPro" id="IPR019906">
    <property type="entry name" value="Ribosomal_uL6_bac-type"/>
</dbReference>
<dbReference type="InterPro" id="IPR002358">
    <property type="entry name" value="Ribosomal_uL6_CS"/>
</dbReference>
<dbReference type="NCBIfam" id="TIGR03654">
    <property type="entry name" value="L6_bact"/>
    <property type="match status" value="1"/>
</dbReference>
<dbReference type="PANTHER" id="PTHR11655">
    <property type="entry name" value="60S/50S RIBOSOMAL PROTEIN L6/L9"/>
    <property type="match status" value="1"/>
</dbReference>
<dbReference type="PANTHER" id="PTHR11655:SF14">
    <property type="entry name" value="LARGE RIBOSOMAL SUBUNIT PROTEIN UL6M"/>
    <property type="match status" value="1"/>
</dbReference>
<dbReference type="Pfam" id="PF00347">
    <property type="entry name" value="Ribosomal_L6"/>
    <property type="match status" value="2"/>
</dbReference>
<dbReference type="PIRSF" id="PIRSF002162">
    <property type="entry name" value="Ribosomal_L6"/>
    <property type="match status" value="1"/>
</dbReference>
<dbReference type="PRINTS" id="PR00059">
    <property type="entry name" value="RIBOSOMALL6"/>
</dbReference>
<dbReference type="SUPFAM" id="SSF56053">
    <property type="entry name" value="Ribosomal protein L6"/>
    <property type="match status" value="2"/>
</dbReference>
<dbReference type="PROSITE" id="PS00525">
    <property type="entry name" value="RIBOSOMAL_L6_1"/>
    <property type="match status" value="1"/>
</dbReference>
<protein>
    <recommendedName>
        <fullName evidence="1">Large ribosomal subunit protein uL6</fullName>
    </recommendedName>
    <alternativeName>
        <fullName evidence="3">50S ribosomal protein L6</fullName>
    </alternativeName>
</protein>
<evidence type="ECO:0000255" key="1">
    <source>
        <dbReference type="HAMAP-Rule" id="MF_01365"/>
    </source>
</evidence>
<evidence type="ECO:0000256" key="2">
    <source>
        <dbReference type="SAM" id="MobiDB-lite"/>
    </source>
</evidence>
<evidence type="ECO:0000305" key="3"/>